<organism>
    <name type="scientific">Homo sapiens</name>
    <name type="common">Human</name>
    <dbReference type="NCBI Taxonomy" id="9606"/>
    <lineage>
        <taxon>Eukaryota</taxon>
        <taxon>Metazoa</taxon>
        <taxon>Chordata</taxon>
        <taxon>Craniata</taxon>
        <taxon>Vertebrata</taxon>
        <taxon>Euteleostomi</taxon>
        <taxon>Mammalia</taxon>
        <taxon>Eutheria</taxon>
        <taxon>Euarchontoglires</taxon>
        <taxon>Primates</taxon>
        <taxon>Haplorrhini</taxon>
        <taxon>Catarrhini</taxon>
        <taxon>Hominidae</taxon>
        <taxon>Homo</taxon>
    </lineage>
</organism>
<name>GUF1_HUMAN</name>
<protein>
    <recommendedName>
        <fullName evidence="1">Translation factor GUF1, mitochondrial</fullName>
        <ecNumber>3.6.5.-</ecNumber>
    </recommendedName>
    <alternativeName>
        <fullName evidence="1">Elongation factor 4 homolog</fullName>
        <shortName evidence="1">EF-4</shortName>
    </alternativeName>
    <alternativeName>
        <fullName evidence="1">GTPase GUF1</fullName>
    </alternativeName>
    <alternativeName>
        <fullName evidence="1">Ribosomal back-translocase</fullName>
    </alternativeName>
</protein>
<reference key="1">
    <citation type="journal article" date="2004" name="Nat. Genet.">
        <title>Complete sequencing and characterization of 21,243 full-length human cDNAs.</title>
        <authorList>
            <person name="Ota T."/>
            <person name="Suzuki Y."/>
            <person name="Nishikawa T."/>
            <person name="Otsuki T."/>
            <person name="Sugiyama T."/>
            <person name="Irie R."/>
            <person name="Wakamatsu A."/>
            <person name="Hayashi K."/>
            <person name="Sato H."/>
            <person name="Nagai K."/>
            <person name="Kimura K."/>
            <person name="Makita H."/>
            <person name="Sekine M."/>
            <person name="Obayashi M."/>
            <person name="Nishi T."/>
            <person name="Shibahara T."/>
            <person name="Tanaka T."/>
            <person name="Ishii S."/>
            <person name="Yamamoto J."/>
            <person name="Saito K."/>
            <person name="Kawai Y."/>
            <person name="Isono Y."/>
            <person name="Nakamura Y."/>
            <person name="Nagahari K."/>
            <person name="Murakami K."/>
            <person name="Yasuda T."/>
            <person name="Iwayanagi T."/>
            <person name="Wagatsuma M."/>
            <person name="Shiratori A."/>
            <person name="Sudo H."/>
            <person name="Hosoiri T."/>
            <person name="Kaku Y."/>
            <person name="Kodaira H."/>
            <person name="Kondo H."/>
            <person name="Sugawara M."/>
            <person name="Takahashi M."/>
            <person name="Kanda K."/>
            <person name="Yokoi T."/>
            <person name="Furuya T."/>
            <person name="Kikkawa E."/>
            <person name="Omura Y."/>
            <person name="Abe K."/>
            <person name="Kamihara K."/>
            <person name="Katsuta N."/>
            <person name="Sato K."/>
            <person name="Tanikawa M."/>
            <person name="Yamazaki M."/>
            <person name="Ninomiya K."/>
            <person name="Ishibashi T."/>
            <person name="Yamashita H."/>
            <person name="Murakawa K."/>
            <person name="Fujimori K."/>
            <person name="Tanai H."/>
            <person name="Kimata M."/>
            <person name="Watanabe M."/>
            <person name="Hiraoka S."/>
            <person name="Chiba Y."/>
            <person name="Ishida S."/>
            <person name="Ono Y."/>
            <person name="Takiguchi S."/>
            <person name="Watanabe S."/>
            <person name="Yosida M."/>
            <person name="Hotuta T."/>
            <person name="Kusano J."/>
            <person name="Kanehori K."/>
            <person name="Takahashi-Fujii A."/>
            <person name="Hara H."/>
            <person name="Tanase T.-O."/>
            <person name="Nomura Y."/>
            <person name="Togiya S."/>
            <person name="Komai F."/>
            <person name="Hara R."/>
            <person name="Takeuchi K."/>
            <person name="Arita M."/>
            <person name="Imose N."/>
            <person name="Musashino K."/>
            <person name="Yuuki H."/>
            <person name="Oshima A."/>
            <person name="Sasaki N."/>
            <person name="Aotsuka S."/>
            <person name="Yoshikawa Y."/>
            <person name="Matsunawa H."/>
            <person name="Ichihara T."/>
            <person name="Shiohata N."/>
            <person name="Sano S."/>
            <person name="Moriya S."/>
            <person name="Momiyama H."/>
            <person name="Satoh N."/>
            <person name="Takami S."/>
            <person name="Terashima Y."/>
            <person name="Suzuki O."/>
            <person name="Nakagawa S."/>
            <person name="Senoh A."/>
            <person name="Mizoguchi H."/>
            <person name="Goto Y."/>
            <person name="Shimizu F."/>
            <person name="Wakebe H."/>
            <person name="Hishigaki H."/>
            <person name="Watanabe T."/>
            <person name="Sugiyama A."/>
            <person name="Takemoto M."/>
            <person name="Kawakami B."/>
            <person name="Yamazaki M."/>
            <person name="Watanabe K."/>
            <person name="Kumagai A."/>
            <person name="Itakura S."/>
            <person name="Fukuzumi Y."/>
            <person name="Fujimori Y."/>
            <person name="Komiyama M."/>
            <person name="Tashiro H."/>
            <person name="Tanigami A."/>
            <person name="Fujiwara T."/>
            <person name="Ono T."/>
            <person name="Yamada K."/>
            <person name="Fujii Y."/>
            <person name="Ozaki K."/>
            <person name="Hirao M."/>
            <person name="Ohmori Y."/>
            <person name="Kawabata A."/>
            <person name="Hikiji T."/>
            <person name="Kobatake N."/>
            <person name="Inagaki H."/>
            <person name="Ikema Y."/>
            <person name="Okamoto S."/>
            <person name="Okitani R."/>
            <person name="Kawakami T."/>
            <person name="Noguchi S."/>
            <person name="Itoh T."/>
            <person name="Shigeta K."/>
            <person name="Senba T."/>
            <person name="Matsumura K."/>
            <person name="Nakajima Y."/>
            <person name="Mizuno T."/>
            <person name="Morinaga M."/>
            <person name="Sasaki M."/>
            <person name="Togashi T."/>
            <person name="Oyama M."/>
            <person name="Hata H."/>
            <person name="Watanabe M."/>
            <person name="Komatsu T."/>
            <person name="Mizushima-Sugano J."/>
            <person name="Satoh T."/>
            <person name="Shirai Y."/>
            <person name="Takahashi Y."/>
            <person name="Nakagawa K."/>
            <person name="Okumura K."/>
            <person name="Nagase T."/>
            <person name="Nomura N."/>
            <person name="Kikuchi H."/>
            <person name="Masuho Y."/>
            <person name="Yamashita R."/>
            <person name="Nakai K."/>
            <person name="Yada T."/>
            <person name="Nakamura Y."/>
            <person name="Ohara O."/>
            <person name="Isogai T."/>
            <person name="Sugano S."/>
        </authorList>
    </citation>
    <scope>NUCLEOTIDE SEQUENCE [LARGE SCALE MRNA]</scope>
    <scope>VARIANT PRO-58</scope>
    <source>
        <tissue>Colon</tissue>
        <tissue>Teratocarcinoma</tissue>
    </source>
</reference>
<reference key="2">
    <citation type="journal article" date="2004" name="Genome Res.">
        <title>The status, quality, and expansion of the NIH full-length cDNA project: the Mammalian Gene Collection (MGC).</title>
        <authorList>
            <consortium name="The MGC Project Team"/>
        </authorList>
    </citation>
    <scope>NUCLEOTIDE SEQUENCE [LARGE SCALE MRNA]</scope>
    <source>
        <tissue>Brain</tissue>
    </source>
</reference>
<reference key="3">
    <citation type="journal article" date="2016" name="Eur. J. Hum. Genet.">
        <title>West syndrome caused by homozygous variant in the evolutionary conserved gene encoding the mitochondrial elongation factor GUF1.</title>
        <authorList>
            <person name="Alfaiz A.A."/>
            <person name="Mueller V."/>
            <person name="Boutry-Kryza N."/>
            <person name="Ville D."/>
            <person name="Guex N."/>
            <person name="de Bellescize J."/>
            <person name="Rivier C."/>
            <person name="Labalme A."/>
            <person name="des Portes V."/>
            <person name="Edery P."/>
            <person name="Till M."/>
            <person name="Xenarios I."/>
            <person name="Sanlaville D."/>
            <person name="Herrmann J.M."/>
            <person name="Lesca G."/>
            <person name="Reymond A."/>
        </authorList>
    </citation>
    <scope>INVOLVEMENT IN DEE40</scope>
    <scope>VARIANT DEE40 SER-609</scope>
</reference>
<sequence>MWTLVGRGWGCARALAPRATGAALLVAPGPRSAPTLGAAPESWATDRLYSSAEFKEKLDMSRFPVENIRNFSIVAHVDHGKSTLADRLLELTGTIDKTKNNKQVLDKLQVERERGITVKAQTASLFYNCEGKQYLLNLIDTPGHVDFSYEVSRSLSACQGVLLVVDANEGIQAQTVANFFLAFEAQLSVIPVINKIDLKNADPERVENQIEKVFDIPSDECIKISAKLGTNVESVLQAIIERIPPPKVHRKNPLRALVFDSTFDQYRGVIANVALFDGVVSKGDKIVSAHTQKTYEVNEVGVLNPNEQPTHKLYAGQVGYLIAGMKDVTEAQIGDTLCLHKQPVEPLPGFKSAKPMVFAGMYPLDQSEYNNLKSAIEKLTLNDSSVTVHRDSSLALGAGWRLGFLGLLHMEVFNQRLEQEYNASVILTTPTVPYKAVLSSSKLIKEHREKEITIINPAQFPDKSKVTEYLEPVVLGTIITPDEYTGKIMMLCEARRAVQKNMIFIDQNRVMLKYLFPLNEIVVDFYDSLKSLSSGYASFDYEDAGYQTAELVKMDILLNGNTVEELVTVVHKDKAHSIGKAICERLKDSLPRQLFEIAIQAAIGSKIIARETVKAYRKNVLAKCYGGDITRKMKLLKRQAEGKKKLRKIGNVEVPKDAFIKVLKTQSSK</sequence>
<feature type="transit peptide" description="Mitochondrion" evidence="1">
    <location>
        <begin position="1"/>
        <end position="49"/>
    </location>
</feature>
<feature type="chain" id="PRO_0000256251" description="Translation factor GUF1, mitochondrial">
    <location>
        <begin position="50"/>
        <end position="669"/>
    </location>
</feature>
<feature type="domain" description="tr-type G">
    <location>
        <begin position="66"/>
        <end position="247"/>
    </location>
</feature>
<feature type="binding site" evidence="1">
    <location>
        <begin position="75"/>
        <end position="82"/>
    </location>
    <ligand>
        <name>GTP</name>
        <dbReference type="ChEBI" id="CHEBI:37565"/>
    </ligand>
</feature>
<feature type="binding site" evidence="1">
    <location>
        <begin position="140"/>
        <end position="144"/>
    </location>
    <ligand>
        <name>GTP</name>
        <dbReference type="ChEBI" id="CHEBI:37565"/>
    </ligand>
</feature>
<feature type="binding site" evidence="1">
    <location>
        <begin position="194"/>
        <end position="197"/>
    </location>
    <ligand>
        <name>GTP</name>
        <dbReference type="ChEBI" id="CHEBI:37565"/>
    </ligand>
</feature>
<feature type="sequence variant" id="VAR_028895" description="In dbSNP:rs6447368." evidence="2">
    <original>L</original>
    <variation>P</variation>
    <location>
        <position position="58"/>
    </location>
</feature>
<feature type="sequence variant" id="VAR_028896" description="In dbSNP:rs10470742.">
    <original>T</original>
    <variation>I</variation>
    <location>
        <position position="329"/>
    </location>
</feature>
<feature type="sequence variant" id="VAR_077804" description="In DEE40; dbSNP:rs879255631." evidence="3">
    <original>A</original>
    <variation>S</variation>
    <location>
        <position position="609"/>
    </location>
</feature>
<feature type="sequence conflict" description="In Ref. 1; BAB14507." evidence="4" ref="1">
    <original>A</original>
    <variation>T</variation>
    <location>
        <position position="85"/>
    </location>
</feature>
<feature type="sequence conflict" description="In Ref. 1; BAB14507." evidence="4" ref="1">
    <original>L</original>
    <variation>P</variation>
    <location>
        <position position="417"/>
    </location>
</feature>
<feature type="sequence conflict" description="In Ref. 1; BAB14507." evidence="4" ref="1">
    <original>Y</original>
    <variation>C</variation>
    <location>
        <position position="625"/>
    </location>
</feature>
<gene>
    <name evidence="1" type="primary">GUF1</name>
</gene>
<comment type="function">
    <text evidence="1">Promotes mitochondrial protein synthesis. May act as a fidelity factor of the translation reaction, by catalyzing a one-codon backward translocation of tRNAs on improperly translocated ribosomes. Binds to mitochondrial ribosomes in a GTP-dependent manner.</text>
</comment>
<comment type="catalytic activity">
    <reaction evidence="1">
        <text>GTP + H2O = GDP + phosphate + H(+)</text>
        <dbReference type="Rhea" id="RHEA:19669"/>
        <dbReference type="ChEBI" id="CHEBI:15377"/>
        <dbReference type="ChEBI" id="CHEBI:15378"/>
        <dbReference type="ChEBI" id="CHEBI:37565"/>
        <dbReference type="ChEBI" id="CHEBI:43474"/>
        <dbReference type="ChEBI" id="CHEBI:58189"/>
    </reaction>
</comment>
<comment type="subcellular location">
    <subcellularLocation>
        <location evidence="1">Mitochondrion inner membrane</location>
        <topology evidence="1">Peripheral membrane protein</topology>
        <orientation evidence="1">Matrix side</orientation>
    </subcellularLocation>
</comment>
<comment type="disease" evidence="3">
    <disease id="DI-04793">
        <name>Developmental and epileptic encephalopathy 40</name>
        <acronym>DEE40</acronym>
        <description>A form of epileptic encephalopathy, a heterogeneous group of severe early-onset epilepsies characterized by refractory seizures, neurodevelopmental impairment, and poor prognosis. Development is normal prior to seizure onset, after which cognitive and motor delays become apparent. DEE40 inheritance is autosomal recessive.</description>
        <dbReference type="MIM" id="617065"/>
    </disease>
    <text>The disease is caused by variants affecting the gene represented in this entry.</text>
</comment>
<comment type="similarity">
    <text evidence="4">Belongs to the TRAFAC class translation factor GTPase superfamily. Classic translation factor GTPase family. LepA subfamily.</text>
</comment>
<comment type="sequence caution" evidence="4">
    <conflict type="frameshift">
        <sequence resource="EMBL-CDS" id="BAB15090"/>
    </conflict>
</comment>
<dbReference type="EC" id="3.6.5.-"/>
<dbReference type="EMBL" id="AK023282">
    <property type="protein sequence ID" value="BAB14507.1"/>
    <property type="molecule type" value="mRNA"/>
</dbReference>
<dbReference type="EMBL" id="AK025248">
    <property type="protein sequence ID" value="BAB15090.1"/>
    <property type="status" value="ALT_SEQ"/>
    <property type="molecule type" value="mRNA"/>
</dbReference>
<dbReference type="EMBL" id="BC036768">
    <property type="protein sequence ID" value="AAH36768.1"/>
    <property type="molecule type" value="mRNA"/>
</dbReference>
<dbReference type="CCDS" id="CCDS3468.1"/>
<dbReference type="RefSeq" id="NP_068746.2">
    <property type="nucleotide sequence ID" value="NM_021927.3"/>
</dbReference>
<dbReference type="SMR" id="Q8N442"/>
<dbReference type="BioGRID" id="121939">
    <property type="interactions" value="107"/>
</dbReference>
<dbReference type="FunCoup" id="Q8N442">
    <property type="interactions" value="2279"/>
</dbReference>
<dbReference type="IntAct" id="Q8N442">
    <property type="interactions" value="53"/>
</dbReference>
<dbReference type="MINT" id="Q8N442"/>
<dbReference type="STRING" id="9606.ENSP00000281543"/>
<dbReference type="GlyGen" id="Q8N442">
    <property type="glycosylation" value="1 site, 1 O-linked glycan (1 site)"/>
</dbReference>
<dbReference type="iPTMnet" id="Q8N442"/>
<dbReference type="PhosphoSitePlus" id="Q8N442"/>
<dbReference type="BioMuta" id="GUF1"/>
<dbReference type="DMDM" id="74728811"/>
<dbReference type="jPOST" id="Q8N442"/>
<dbReference type="MassIVE" id="Q8N442"/>
<dbReference type="PaxDb" id="9606-ENSP00000281543"/>
<dbReference type="PeptideAtlas" id="Q8N442"/>
<dbReference type="ProteomicsDB" id="71880"/>
<dbReference type="Pumba" id="Q8N442"/>
<dbReference type="Antibodypedia" id="1337">
    <property type="antibodies" value="134 antibodies from 26 providers"/>
</dbReference>
<dbReference type="DNASU" id="60558"/>
<dbReference type="Ensembl" id="ENST00000281543.6">
    <property type="protein sequence ID" value="ENSP00000281543.5"/>
    <property type="gene ID" value="ENSG00000151806.14"/>
</dbReference>
<dbReference type="GeneID" id="60558"/>
<dbReference type="KEGG" id="hsa:60558"/>
<dbReference type="MANE-Select" id="ENST00000281543.6">
    <property type="protein sequence ID" value="ENSP00000281543.5"/>
    <property type="RefSeq nucleotide sequence ID" value="NM_021927.3"/>
    <property type="RefSeq protein sequence ID" value="NP_068746.2"/>
</dbReference>
<dbReference type="UCSC" id="uc003gww.5">
    <property type="organism name" value="human"/>
</dbReference>
<dbReference type="AGR" id="HGNC:25799"/>
<dbReference type="CTD" id="60558"/>
<dbReference type="DisGeNET" id="60558"/>
<dbReference type="GeneCards" id="GUF1"/>
<dbReference type="HGNC" id="HGNC:25799">
    <property type="gene designation" value="GUF1"/>
</dbReference>
<dbReference type="HPA" id="ENSG00000151806">
    <property type="expression patterns" value="Low tissue specificity"/>
</dbReference>
<dbReference type="MalaCards" id="GUF1"/>
<dbReference type="MIM" id="617064">
    <property type="type" value="gene"/>
</dbReference>
<dbReference type="MIM" id="617065">
    <property type="type" value="phenotype"/>
</dbReference>
<dbReference type="neXtProt" id="NX_Q8N442"/>
<dbReference type="OpenTargets" id="ENSG00000151806"/>
<dbReference type="Orphanet" id="3451">
    <property type="disease" value="Infantile epileptic spasms syndrome"/>
</dbReference>
<dbReference type="PharmGKB" id="PA143485485"/>
<dbReference type="VEuPathDB" id="HostDB:ENSG00000151806"/>
<dbReference type="eggNOG" id="KOG0462">
    <property type="taxonomic scope" value="Eukaryota"/>
</dbReference>
<dbReference type="GeneTree" id="ENSGT00550000074940"/>
<dbReference type="HOGENOM" id="CLU_009995_3_3_1"/>
<dbReference type="InParanoid" id="Q8N442"/>
<dbReference type="OMA" id="QVKCDEN"/>
<dbReference type="OrthoDB" id="1074at2759"/>
<dbReference type="PAN-GO" id="Q8N442">
    <property type="GO annotations" value="3 GO annotations based on evolutionary models"/>
</dbReference>
<dbReference type="PhylomeDB" id="Q8N442"/>
<dbReference type="TreeFam" id="TF314751"/>
<dbReference type="PathwayCommons" id="Q8N442"/>
<dbReference type="SignaLink" id="Q8N442"/>
<dbReference type="BioGRID-ORCS" id="60558">
    <property type="hits" value="11 hits in 1156 CRISPR screens"/>
</dbReference>
<dbReference type="ChiTaRS" id="GUF1">
    <property type="organism name" value="human"/>
</dbReference>
<dbReference type="GenomeRNAi" id="60558"/>
<dbReference type="Pharos" id="Q8N442">
    <property type="development level" value="Tbio"/>
</dbReference>
<dbReference type="PRO" id="PR:Q8N442"/>
<dbReference type="Proteomes" id="UP000005640">
    <property type="component" value="Chromosome 4"/>
</dbReference>
<dbReference type="RNAct" id="Q8N442">
    <property type="molecule type" value="protein"/>
</dbReference>
<dbReference type="Bgee" id="ENSG00000151806">
    <property type="expression patterns" value="Expressed in ventricular zone and 184 other cell types or tissues"/>
</dbReference>
<dbReference type="ExpressionAtlas" id="Q8N442">
    <property type="expression patterns" value="baseline and differential"/>
</dbReference>
<dbReference type="GO" id="GO:0005743">
    <property type="term" value="C:mitochondrial inner membrane"/>
    <property type="evidence" value="ECO:0007669"/>
    <property type="project" value="UniProtKB-SubCell"/>
</dbReference>
<dbReference type="GO" id="GO:0005759">
    <property type="term" value="C:mitochondrial matrix"/>
    <property type="evidence" value="ECO:0007669"/>
    <property type="project" value="UniProtKB-UniRule"/>
</dbReference>
<dbReference type="GO" id="GO:0005739">
    <property type="term" value="C:mitochondrion"/>
    <property type="evidence" value="ECO:0006056"/>
    <property type="project" value="FlyBase"/>
</dbReference>
<dbReference type="GO" id="GO:0005525">
    <property type="term" value="F:GTP binding"/>
    <property type="evidence" value="ECO:0007669"/>
    <property type="project" value="UniProtKB-UniRule"/>
</dbReference>
<dbReference type="GO" id="GO:0003924">
    <property type="term" value="F:GTPase activity"/>
    <property type="evidence" value="ECO:0007669"/>
    <property type="project" value="UniProtKB-UniRule"/>
</dbReference>
<dbReference type="GO" id="GO:0097177">
    <property type="term" value="F:mitochondrial ribosome binding"/>
    <property type="evidence" value="ECO:0000318"/>
    <property type="project" value="GO_Central"/>
</dbReference>
<dbReference type="GO" id="GO:0045727">
    <property type="term" value="P:positive regulation of translation"/>
    <property type="evidence" value="ECO:0000318"/>
    <property type="project" value="GO_Central"/>
</dbReference>
<dbReference type="GO" id="GO:0006412">
    <property type="term" value="P:translation"/>
    <property type="evidence" value="ECO:0007669"/>
    <property type="project" value="UniProtKB-KW"/>
</dbReference>
<dbReference type="CDD" id="cd03699">
    <property type="entry name" value="EF4_II"/>
    <property type="match status" value="1"/>
</dbReference>
<dbReference type="CDD" id="cd16260">
    <property type="entry name" value="EF4_III"/>
    <property type="match status" value="1"/>
</dbReference>
<dbReference type="CDD" id="cd01890">
    <property type="entry name" value="LepA"/>
    <property type="match status" value="1"/>
</dbReference>
<dbReference type="CDD" id="cd03709">
    <property type="entry name" value="lepA_C"/>
    <property type="match status" value="1"/>
</dbReference>
<dbReference type="FunFam" id="3.40.50.300:FF:000078">
    <property type="entry name" value="Elongation factor 4"/>
    <property type="match status" value="1"/>
</dbReference>
<dbReference type="FunFam" id="2.40.30.10:FF:000015">
    <property type="entry name" value="Translation factor GUF1, mitochondrial"/>
    <property type="match status" value="1"/>
</dbReference>
<dbReference type="FunFam" id="3.30.70.240:FF:000007">
    <property type="entry name" value="Translation factor GUF1, mitochondrial"/>
    <property type="match status" value="1"/>
</dbReference>
<dbReference type="FunFam" id="3.30.70.2570:FF:000001">
    <property type="entry name" value="Translation factor GUF1, mitochondrial"/>
    <property type="match status" value="1"/>
</dbReference>
<dbReference type="FunFam" id="3.30.70.870:FF:000004">
    <property type="entry name" value="Translation factor GUF1, mitochondrial"/>
    <property type="match status" value="1"/>
</dbReference>
<dbReference type="Gene3D" id="3.30.70.240">
    <property type="match status" value="1"/>
</dbReference>
<dbReference type="Gene3D" id="3.30.70.2570">
    <property type="entry name" value="Elongation factor 4, C-terminal domain"/>
    <property type="match status" value="1"/>
</dbReference>
<dbReference type="Gene3D" id="3.30.70.870">
    <property type="entry name" value="Elongation Factor G (Translational Gtpase), domain 3"/>
    <property type="match status" value="1"/>
</dbReference>
<dbReference type="Gene3D" id="3.40.50.300">
    <property type="entry name" value="P-loop containing nucleotide triphosphate hydrolases"/>
    <property type="match status" value="1"/>
</dbReference>
<dbReference type="Gene3D" id="2.40.30.10">
    <property type="entry name" value="Translation factors"/>
    <property type="match status" value="1"/>
</dbReference>
<dbReference type="HAMAP" id="MF_00071">
    <property type="entry name" value="LepA"/>
    <property type="match status" value="1"/>
</dbReference>
<dbReference type="InterPro" id="IPR006297">
    <property type="entry name" value="EF-4"/>
</dbReference>
<dbReference type="InterPro" id="IPR035647">
    <property type="entry name" value="EFG_III/V"/>
</dbReference>
<dbReference type="InterPro" id="IPR000640">
    <property type="entry name" value="EFG_V-like"/>
</dbReference>
<dbReference type="InterPro" id="IPR004161">
    <property type="entry name" value="EFTu-like_2"/>
</dbReference>
<dbReference type="InterPro" id="IPR031157">
    <property type="entry name" value="G_TR_CS"/>
</dbReference>
<dbReference type="InterPro" id="IPR038363">
    <property type="entry name" value="LepA_C_sf"/>
</dbReference>
<dbReference type="InterPro" id="IPR013842">
    <property type="entry name" value="LepA_CTD"/>
</dbReference>
<dbReference type="InterPro" id="IPR035654">
    <property type="entry name" value="LepA_IV"/>
</dbReference>
<dbReference type="InterPro" id="IPR027417">
    <property type="entry name" value="P-loop_NTPase"/>
</dbReference>
<dbReference type="InterPro" id="IPR005225">
    <property type="entry name" value="Small_GTP-bd"/>
</dbReference>
<dbReference type="InterPro" id="IPR000795">
    <property type="entry name" value="T_Tr_GTP-bd_dom"/>
</dbReference>
<dbReference type="InterPro" id="IPR009000">
    <property type="entry name" value="Transl_B-barrel_sf"/>
</dbReference>
<dbReference type="NCBIfam" id="TIGR01393">
    <property type="entry name" value="lepA"/>
    <property type="match status" value="1"/>
</dbReference>
<dbReference type="NCBIfam" id="TIGR00231">
    <property type="entry name" value="small_GTP"/>
    <property type="match status" value="1"/>
</dbReference>
<dbReference type="PANTHER" id="PTHR43512:SF7">
    <property type="entry name" value="TRANSLATION FACTOR GUF1, MITOCHONDRIAL"/>
    <property type="match status" value="1"/>
</dbReference>
<dbReference type="PANTHER" id="PTHR43512">
    <property type="entry name" value="TRANSLATION FACTOR GUF1-RELATED"/>
    <property type="match status" value="1"/>
</dbReference>
<dbReference type="Pfam" id="PF00679">
    <property type="entry name" value="EFG_C"/>
    <property type="match status" value="1"/>
</dbReference>
<dbReference type="Pfam" id="PF00009">
    <property type="entry name" value="GTP_EFTU"/>
    <property type="match status" value="1"/>
</dbReference>
<dbReference type="Pfam" id="PF03144">
    <property type="entry name" value="GTP_EFTU_D2"/>
    <property type="match status" value="1"/>
</dbReference>
<dbReference type="Pfam" id="PF06421">
    <property type="entry name" value="LepA_C"/>
    <property type="match status" value="1"/>
</dbReference>
<dbReference type="PRINTS" id="PR00315">
    <property type="entry name" value="ELONGATNFCT"/>
</dbReference>
<dbReference type="SUPFAM" id="SSF54980">
    <property type="entry name" value="EF-G C-terminal domain-like"/>
    <property type="match status" value="2"/>
</dbReference>
<dbReference type="SUPFAM" id="SSF52540">
    <property type="entry name" value="P-loop containing nucleoside triphosphate hydrolases"/>
    <property type="match status" value="1"/>
</dbReference>
<dbReference type="SUPFAM" id="SSF50447">
    <property type="entry name" value="Translation proteins"/>
    <property type="match status" value="1"/>
</dbReference>
<dbReference type="PROSITE" id="PS00301">
    <property type="entry name" value="G_TR_1"/>
    <property type="match status" value="1"/>
</dbReference>
<dbReference type="PROSITE" id="PS51722">
    <property type="entry name" value="G_TR_2"/>
    <property type="match status" value="1"/>
</dbReference>
<keyword id="KW-0225">Disease variant</keyword>
<keyword id="KW-0887">Epilepsy</keyword>
<keyword id="KW-0342">GTP-binding</keyword>
<keyword id="KW-0378">Hydrolase</keyword>
<keyword id="KW-0472">Membrane</keyword>
<keyword id="KW-0496">Mitochondrion</keyword>
<keyword id="KW-0999">Mitochondrion inner membrane</keyword>
<keyword id="KW-0547">Nucleotide-binding</keyword>
<keyword id="KW-0648">Protein biosynthesis</keyword>
<keyword id="KW-1267">Proteomics identification</keyword>
<keyword id="KW-1185">Reference proteome</keyword>
<keyword id="KW-0809">Transit peptide</keyword>
<proteinExistence type="evidence at protein level"/>
<evidence type="ECO:0000255" key="1">
    <source>
        <dbReference type="HAMAP-Rule" id="MF_03137"/>
    </source>
</evidence>
<evidence type="ECO:0000269" key="2">
    <source>
    </source>
</evidence>
<evidence type="ECO:0000269" key="3">
    <source>
    </source>
</evidence>
<evidence type="ECO:0000305" key="4"/>
<accession>Q8N442</accession>
<accession>Q5XKM8</accession>
<accession>Q9H710</accession>
<accession>Q9H8U4</accession>